<name>VCOX_BPHC1</name>
<comment type="function">
    <text>Accessory protein needed to activate excisive recombination. Appears to serve the additional function of repressing the production of the lysogenic repressor.</text>
</comment>
<comment type="similarity">
    <text evidence="1">To phage P22 cox.</text>
</comment>
<keyword id="KW-0238">DNA-binding</keyword>
<keyword id="KW-1185">Reference proteome</keyword>
<keyword id="KW-0678">Repressor</keyword>
<keyword id="KW-0804">Transcription</keyword>
<keyword id="KW-0805">Transcription regulation</keyword>
<sequence>MSKQNAICINIHMEQPYMTREEFAKKLDVSTRTIDRLRQQGVLKCIKMKNDEGEETERGLVLVDLVAIAVRNAKNAFQI</sequence>
<organism>
    <name type="scientific">Haemophilus phage HP1 (strain HP1c1)</name>
    <name type="common">Bacteriophage HP1</name>
    <dbReference type="NCBI Taxonomy" id="1289570"/>
    <lineage>
        <taxon>Viruses</taxon>
        <taxon>Duplodnaviria</taxon>
        <taxon>Heunggongvirae</taxon>
        <taxon>Uroviricota</taxon>
        <taxon>Caudoviricetes</taxon>
        <taxon>Peduoviridae</taxon>
        <taxon>Hpunavirus</taxon>
        <taxon>Haemophilus phage HP1</taxon>
    </lineage>
</organism>
<accession>P51705</accession>
<reference key="1">
    <citation type="journal article" date="1994" name="Mol. Microbiol.">
        <title>Identification of an HP1 phage protein required for site-specific excision.</title>
        <authorList>
            <person name="Esposito D."/>
            <person name="Scocca J.J."/>
        </authorList>
    </citation>
    <scope>NUCLEOTIDE SEQUENCE [GENOMIC DNA]</scope>
</reference>
<reference key="2">
    <citation type="journal article" date="1996" name="Nucleic Acids Res.">
        <title>The complete nucleotide sequence of bacteriophage HP1 DNA.</title>
        <authorList>
            <person name="Esposito D."/>
            <person name="Fitzmaurice W.P."/>
            <person name="Benjamin R.C."/>
            <person name="Goodman S.D."/>
            <person name="Waldman A.S."/>
            <person name="Scocca J.J."/>
        </authorList>
    </citation>
    <scope>NUCLEOTIDE SEQUENCE [LARGE SCALE GENOMIC DNA]</scope>
</reference>
<feature type="chain" id="PRO_0000165304" description="Regulatory protein cox">
    <location>
        <begin position="1"/>
        <end position="79"/>
    </location>
</feature>
<organismHost>
    <name type="scientific">Haemophilus influenzae</name>
    <dbReference type="NCBI Taxonomy" id="727"/>
</organismHost>
<proteinExistence type="predicted"/>
<dbReference type="EMBL" id="U24159">
    <property type="protein sequence ID" value="AAB09188.1"/>
    <property type="molecule type" value="Genomic_DNA"/>
</dbReference>
<dbReference type="PIR" id="S69509">
    <property type="entry name" value="S69509"/>
</dbReference>
<dbReference type="RefSeq" id="NP_043472.1">
    <property type="nucleotide sequence ID" value="NC_001697.1"/>
</dbReference>
<dbReference type="SMR" id="P51705"/>
<dbReference type="GeneID" id="1261145"/>
<dbReference type="KEGG" id="vg:1261145"/>
<dbReference type="Proteomes" id="UP000001713">
    <property type="component" value="Segment"/>
</dbReference>
<dbReference type="GO" id="GO:0003677">
    <property type="term" value="F:DNA binding"/>
    <property type="evidence" value="ECO:0007669"/>
    <property type="project" value="UniProtKB-KW"/>
</dbReference>
<gene>
    <name type="primary">cox</name>
</gene>
<protein>
    <recommendedName>
        <fullName>Regulatory protein cox</fullName>
    </recommendedName>
</protein>
<evidence type="ECO:0000305" key="1"/>